<dbReference type="EC" id="3.2.2.-" evidence="1"/>
<dbReference type="EMBL" id="D83026">
    <property type="protein sequence ID" value="BAA11741.1"/>
    <property type="molecule type" value="Genomic_DNA"/>
</dbReference>
<dbReference type="EMBL" id="AL009126">
    <property type="protein sequence ID" value="CAB15888.1"/>
    <property type="molecule type" value="Genomic_DNA"/>
</dbReference>
<dbReference type="PIR" id="D70082">
    <property type="entry name" value="D70082"/>
</dbReference>
<dbReference type="RefSeq" id="WP_003227303.1">
    <property type="nucleotide sequence ID" value="NZ_OZ025638.1"/>
</dbReference>
<dbReference type="SMR" id="P94378"/>
<dbReference type="FunCoup" id="P94378">
    <property type="interactions" value="130"/>
</dbReference>
<dbReference type="STRING" id="224308.BSU38620"/>
<dbReference type="PaxDb" id="224308-BSU38620"/>
<dbReference type="EnsemblBacteria" id="CAB15888">
    <property type="protein sequence ID" value="CAB15888"/>
    <property type="gene ID" value="BSU_38620"/>
</dbReference>
<dbReference type="GeneID" id="937391"/>
<dbReference type="KEGG" id="bsu:BSU38620"/>
<dbReference type="PATRIC" id="fig|224308.179.peg.4181"/>
<dbReference type="eggNOG" id="COG2094">
    <property type="taxonomic scope" value="Bacteria"/>
</dbReference>
<dbReference type="InParanoid" id="P94378"/>
<dbReference type="OrthoDB" id="9794313at2"/>
<dbReference type="PhylomeDB" id="P94378"/>
<dbReference type="BioCyc" id="BSUB:BSU38620-MONOMER"/>
<dbReference type="SABIO-RK" id="P94378"/>
<dbReference type="Proteomes" id="UP000001570">
    <property type="component" value="Chromosome"/>
</dbReference>
<dbReference type="GO" id="GO:0003905">
    <property type="term" value="F:alkylbase DNA N-glycosylase activity"/>
    <property type="evidence" value="ECO:0000318"/>
    <property type="project" value="GO_Central"/>
</dbReference>
<dbReference type="GO" id="GO:0003677">
    <property type="term" value="F:DNA binding"/>
    <property type="evidence" value="ECO:0007669"/>
    <property type="project" value="InterPro"/>
</dbReference>
<dbReference type="GO" id="GO:0006284">
    <property type="term" value="P:base-excision repair"/>
    <property type="evidence" value="ECO:0000318"/>
    <property type="project" value="GO_Central"/>
</dbReference>
<dbReference type="CDD" id="cd00540">
    <property type="entry name" value="AAG"/>
    <property type="match status" value="1"/>
</dbReference>
<dbReference type="FunFam" id="3.10.300.10:FF:000001">
    <property type="entry name" value="Putative 3-methyladenine DNA glycosylase"/>
    <property type="match status" value="1"/>
</dbReference>
<dbReference type="Gene3D" id="3.10.300.10">
    <property type="entry name" value="Methylpurine-DNA glycosylase (MPG)"/>
    <property type="match status" value="1"/>
</dbReference>
<dbReference type="HAMAP" id="MF_00527">
    <property type="entry name" value="3MGH"/>
    <property type="match status" value="1"/>
</dbReference>
<dbReference type="InterPro" id="IPR011034">
    <property type="entry name" value="Formyl_transferase-like_C_sf"/>
</dbReference>
<dbReference type="InterPro" id="IPR003180">
    <property type="entry name" value="MPG"/>
</dbReference>
<dbReference type="InterPro" id="IPR036995">
    <property type="entry name" value="MPG_sf"/>
</dbReference>
<dbReference type="NCBIfam" id="TIGR00567">
    <property type="entry name" value="3mg"/>
    <property type="match status" value="1"/>
</dbReference>
<dbReference type="NCBIfam" id="NF002002">
    <property type="entry name" value="PRK00802.1-2"/>
    <property type="match status" value="1"/>
</dbReference>
<dbReference type="PANTHER" id="PTHR10429">
    <property type="entry name" value="DNA-3-METHYLADENINE GLYCOSYLASE"/>
    <property type="match status" value="1"/>
</dbReference>
<dbReference type="PANTHER" id="PTHR10429:SF0">
    <property type="entry name" value="DNA-3-METHYLADENINE GLYCOSYLASE"/>
    <property type="match status" value="1"/>
</dbReference>
<dbReference type="Pfam" id="PF02245">
    <property type="entry name" value="Pur_DNA_glyco"/>
    <property type="match status" value="1"/>
</dbReference>
<dbReference type="SUPFAM" id="SSF50486">
    <property type="entry name" value="FMT C-terminal domain-like"/>
    <property type="match status" value="1"/>
</dbReference>
<gene>
    <name type="primary">yxlJ</name>
    <name type="ordered locus">BSU38620</name>
</gene>
<organism>
    <name type="scientific">Bacillus subtilis (strain 168)</name>
    <dbReference type="NCBI Taxonomy" id="224308"/>
    <lineage>
        <taxon>Bacteria</taxon>
        <taxon>Bacillati</taxon>
        <taxon>Bacillota</taxon>
        <taxon>Bacilli</taxon>
        <taxon>Bacillales</taxon>
        <taxon>Bacillaceae</taxon>
        <taxon>Bacillus</taxon>
    </lineage>
</organism>
<keyword id="KW-0227">DNA damage</keyword>
<keyword id="KW-0234">DNA repair</keyword>
<keyword id="KW-0378">Hydrolase</keyword>
<keyword id="KW-1185">Reference proteome</keyword>
<name>3MGH_BACSU</name>
<reference key="1">
    <citation type="journal article" date="1996" name="Microbiology">
        <title>Sequencing of a 65 kb region of the Bacillus subtilis genome containing the lic and cel loci, and creation of a 177 kb contig covering the gnt-sacXY region.</title>
        <authorList>
            <person name="Yoshida K."/>
            <person name="Shindo K."/>
            <person name="Sano H."/>
            <person name="Seki S."/>
            <person name="Fujimura M."/>
            <person name="Yanai N."/>
            <person name="Miwa Y."/>
            <person name="Fujita Y."/>
        </authorList>
    </citation>
    <scope>NUCLEOTIDE SEQUENCE [GENOMIC DNA]</scope>
    <source>
        <strain>168 / BGSC1A1</strain>
    </source>
</reference>
<reference key="2">
    <citation type="journal article" date="1997" name="Nature">
        <title>The complete genome sequence of the Gram-positive bacterium Bacillus subtilis.</title>
        <authorList>
            <person name="Kunst F."/>
            <person name="Ogasawara N."/>
            <person name="Moszer I."/>
            <person name="Albertini A.M."/>
            <person name="Alloni G."/>
            <person name="Azevedo V."/>
            <person name="Bertero M.G."/>
            <person name="Bessieres P."/>
            <person name="Bolotin A."/>
            <person name="Borchert S."/>
            <person name="Borriss R."/>
            <person name="Boursier L."/>
            <person name="Brans A."/>
            <person name="Braun M."/>
            <person name="Brignell S.C."/>
            <person name="Bron S."/>
            <person name="Brouillet S."/>
            <person name="Bruschi C.V."/>
            <person name="Caldwell B."/>
            <person name="Capuano V."/>
            <person name="Carter N.M."/>
            <person name="Choi S.-K."/>
            <person name="Codani J.-J."/>
            <person name="Connerton I.F."/>
            <person name="Cummings N.J."/>
            <person name="Daniel R.A."/>
            <person name="Denizot F."/>
            <person name="Devine K.M."/>
            <person name="Duesterhoeft A."/>
            <person name="Ehrlich S.D."/>
            <person name="Emmerson P.T."/>
            <person name="Entian K.-D."/>
            <person name="Errington J."/>
            <person name="Fabret C."/>
            <person name="Ferrari E."/>
            <person name="Foulger D."/>
            <person name="Fritz C."/>
            <person name="Fujita M."/>
            <person name="Fujita Y."/>
            <person name="Fuma S."/>
            <person name="Galizzi A."/>
            <person name="Galleron N."/>
            <person name="Ghim S.-Y."/>
            <person name="Glaser P."/>
            <person name="Goffeau A."/>
            <person name="Golightly E.J."/>
            <person name="Grandi G."/>
            <person name="Guiseppi G."/>
            <person name="Guy B.J."/>
            <person name="Haga K."/>
            <person name="Haiech J."/>
            <person name="Harwood C.R."/>
            <person name="Henaut A."/>
            <person name="Hilbert H."/>
            <person name="Holsappel S."/>
            <person name="Hosono S."/>
            <person name="Hullo M.-F."/>
            <person name="Itaya M."/>
            <person name="Jones L.-M."/>
            <person name="Joris B."/>
            <person name="Karamata D."/>
            <person name="Kasahara Y."/>
            <person name="Klaerr-Blanchard M."/>
            <person name="Klein C."/>
            <person name="Kobayashi Y."/>
            <person name="Koetter P."/>
            <person name="Koningstein G."/>
            <person name="Krogh S."/>
            <person name="Kumano M."/>
            <person name="Kurita K."/>
            <person name="Lapidus A."/>
            <person name="Lardinois S."/>
            <person name="Lauber J."/>
            <person name="Lazarevic V."/>
            <person name="Lee S.-M."/>
            <person name="Levine A."/>
            <person name="Liu H."/>
            <person name="Masuda S."/>
            <person name="Mauel C."/>
            <person name="Medigue C."/>
            <person name="Medina N."/>
            <person name="Mellado R.P."/>
            <person name="Mizuno M."/>
            <person name="Moestl D."/>
            <person name="Nakai S."/>
            <person name="Noback M."/>
            <person name="Noone D."/>
            <person name="O'Reilly M."/>
            <person name="Ogawa K."/>
            <person name="Ogiwara A."/>
            <person name="Oudega B."/>
            <person name="Park S.-H."/>
            <person name="Parro V."/>
            <person name="Pohl T.M."/>
            <person name="Portetelle D."/>
            <person name="Porwollik S."/>
            <person name="Prescott A.M."/>
            <person name="Presecan E."/>
            <person name="Pujic P."/>
            <person name="Purnelle B."/>
            <person name="Rapoport G."/>
            <person name="Rey M."/>
            <person name="Reynolds S."/>
            <person name="Rieger M."/>
            <person name="Rivolta C."/>
            <person name="Rocha E."/>
            <person name="Roche B."/>
            <person name="Rose M."/>
            <person name="Sadaie Y."/>
            <person name="Sato T."/>
            <person name="Scanlan E."/>
            <person name="Schleich S."/>
            <person name="Schroeter R."/>
            <person name="Scoffone F."/>
            <person name="Sekiguchi J."/>
            <person name="Sekowska A."/>
            <person name="Seror S.J."/>
            <person name="Serror P."/>
            <person name="Shin B.-S."/>
            <person name="Soldo B."/>
            <person name="Sorokin A."/>
            <person name="Tacconi E."/>
            <person name="Takagi T."/>
            <person name="Takahashi H."/>
            <person name="Takemaru K."/>
            <person name="Takeuchi M."/>
            <person name="Tamakoshi A."/>
            <person name="Tanaka T."/>
            <person name="Terpstra P."/>
            <person name="Tognoni A."/>
            <person name="Tosato V."/>
            <person name="Uchiyama S."/>
            <person name="Vandenbol M."/>
            <person name="Vannier F."/>
            <person name="Vassarotti A."/>
            <person name="Viari A."/>
            <person name="Wambutt R."/>
            <person name="Wedler E."/>
            <person name="Wedler H."/>
            <person name="Weitzenegger T."/>
            <person name="Winters P."/>
            <person name="Wipat A."/>
            <person name="Yamamoto H."/>
            <person name="Yamane K."/>
            <person name="Yasumoto K."/>
            <person name="Yata K."/>
            <person name="Yoshida K."/>
            <person name="Yoshikawa H.-F."/>
            <person name="Zumstein E."/>
            <person name="Yoshikawa H."/>
            <person name="Danchin A."/>
        </authorList>
    </citation>
    <scope>NUCLEOTIDE SEQUENCE [LARGE SCALE GENOMIC DNA]</scope>
    <source>
        <strain>168</strain>
    </source>
</reference>
<protein>
    <recommendedName>
        <fullName evidence="1">Putative 3-methyladenine DNA glycosylase</fullName>
        <ecNumber evidence="1">3.2.2.-</ecNumber>
    </recommendedName>
</protein>
<accession>P94378</accession>
<evidence type="ECO:0000255" key="1">
    <source>
        <dbReference type="HAMAP-Rule" id="MF_00527"/>
    </source>
</evidence>
<comment type="similarity">
    <text evidence="1">Belongs to the DNA glycosylase MPG family.</text>
</comment>
<sequence length="196" mass="22124">MTREKNPLPITFYQKTALELAPSLLGCLLVKETDEGTASGYIVETEAYMGAGDRAAHSFNNRRTKRTEIMFAEAGRVYTYVMHTHTLLNVVAAEEDVPQAVLIRAIEPHEGQLLMEERRPGRSPREWTNGPGKLTKALGVTMNDYGRWITEQPLYIESGYTPEAISTGPRIGIDNSGEARDYPWRFWVTGNRYVSR</sequence>
<feature type="chain" id="PRO_0000100073" description="Putative 3-methyladenine DNA glycosylase">
    <location>
        <begin position="1"/>
        <end position="196"/>
    </location>
</feature>
<proteinExistence type="inferred from homology"/>